<comment type="function">
    <text evidence="1">Catalyzes the conversion of xanthine monophosphate (XMP) to GMP in the presence of glutamine and ATP through an adenyl-XMP intermediate.</text>
</comment>
<comment type="catalytic activity">
    <reaction evidence="1">
        <text>XMP + L-glutamine + ATP + H2O = GMP + L-glutamate + AMP + diphosphate + 2 H(+)</text>
        <dbReference type="Rhea" id="RHEA:11680"/>
        <dbReference type="ChEBI" id="CHEBI:15377"/>
        <dbReference type="ChEBI" id="CHEBI:15378"/>
        <dbReference type="ChEBI" id="CHEBI:29985"/>
        <dbReference type="ChEBI" id="CHEBI:30616"/>
        <dbReference type="ChEBI" id="CHEBI:33019"/>
        <dbReference type="ChEBI" id="CHEBI:57464"/>
        <dbReference type="ChEBI" id="CHEBI:58115"/>
        <dbReference type="ChEBI" id="CHEBI:58359"/>
        <dbReference type="ChEBI" id="CHEBI:456215"/>
        <dbReference type="EC" id="6.3.5.2"/>
    </reaction>
</comment>
<comment type="cofactor">
    <cofactor evidence="3">
        <name>Mg(2+)</name>
        <dbReference type="ChEBI" id="CHEBI:18420"/>
    </cofactor>
</comment>
<comment type="pathway">
    <text evidence="1">Purine metabolism; GMP biosynthesis; GMP from XMP (L-Gln route): step 1/1.</text>
</comment>
<comment type="subunit">
    <text evidence="3">Homodimer.</text>
</comment>
<comment type="subcellular location">
    <subcellularLocation>
        <location evidence="4">Cytoplasm</location>
        <location evidence="4">Cytosol</location>
    </subcellularLocation>
</comment>
<organism>
    <name type="scientific">Yarrowia lipolytica (strain CLIB 122 / E 150)</name>
    <name type="common">Yeast</name>
    <name type="synonym">Candida lipolytica</name>
    <dbReference type="NCBI Taxonomy" id="284591"/>
    <lineage>
        <taxon>Eukaryota</taxon>
        <taxon>Fungi</taxon>
        <taxon>Dikarya</taxon>
        <taxon>Ascomycota</taxon>
        <taxon>Saccharomycotina</taxon>
        <taxon>Dipodascomycetes</taxon>
        <taxon>Dipodascales</taxon>
        <taxon>Dipodascales incertae sedis</taxon>
        <taxon>Yarrowia</taxon>
    </lineage>
</organism>
<feature type="chain" id="PRO_0000286156" description="GMP synthase [glutamine-hydrolyzing]">
    <location>
        <begin position="1"/>
        <end position="527"/>
    </location>
</feature>
<feature type="domain" description="Glutamine amidotransferase type-1" evidence="5">
    <location>
        <begin position="13"/>
        <end position="202"/>
    </location>
</feature>
<feature type="domain" description="GMPS ATP-PPase" evidence="6">
    <location>
        <begin position="203"/>
        <end position="402"/>
    </location>
</feature>
<feature type="active site" description="Nucleophile" evidence="5">
    <location>
        <position position="89"/>
    </location>
</feature>
<feature type="active site" evidence="5">
    <location>
        <position position="176"/>
    </location>
</feature>
<feature type="active site" evidence="5">
    <location>
        <position position="178"/>
    </location>
</feature>
<feature type="binding site" evidence="6">
    <location>
        <begin position="231"/>
        <end position="237"/>
    </location>
    <ligand>
        <name>ATP</name>
        <dbReference type="ChEBI" id="CHEBI:30616"/>
    </ligand>
</feature>
<feature type="binding site" evidence="2">
    <location>
        <position position="304"/>
    </location>
    <ligand>
        <name>XMP</name>
        <dbReference type="ChEBI" id="CHEBI:57464"/>
    </ligand>
</feature>
<feature type="binding site" evidence="2">
    <location>
        <position position="464"/>
    </location>
    <ligand>
        <name>XMP</name>
        <dbReference type="ChEBI" id="CHEBI:57464"/>
    </ligand>
</feature>
<feature type="binding site" evidence="2">
    <location>
        <position position="519"/>
    </location>
    <ligand>
        <name>XMP</name>
        <dbReference type="ChEBI" id="CHEBI:57464"/>
    </ligand>
</feature>
<feature type="binding site" evidence="2">
    <location>
        <position position="525"/>
    </location>
    <ligand>
        <name>XMP</name>
        <dbReference type="ChEBI" id="CHEBI:57464"/>
    </ligand>
</feature>
<name>GUAA_YARLI</name>
<sequence length="527" mass="58350">MPAPVNIPSMFDTILVLDFGSQYSHLITRRLREFNVYAEMLPCTQKIAELPWKPKGVILSGGPYSVYAEGSPHVDHAVFDLGVPILGICYGMQELAWINGKGVHAGEKKEFGHATIHVEKPSDPLFHGIDNFQVWMSHGDKLNALPTGYEVVATSDNSPYAGIAHTSEKIWGIQFHPEVTHTTKGKQLLQNFAVDICGAAQKWSMENFVDTEIQRIRDLVGPHAEVIGAVSGGVDSTVGAKLMKEAIGDRFHAILVDNGVMRLNECENVKKTLGEGLGINLNVVDAADLFLGKLKGVTDPEKKRKIIGNTFIEVFEEEAAKIQPTHPEAGEIEFLLQGTLYPDVIESISFKGPSQTIKTHHNVGGLLDNMKLKLIEPLRELFKDEVRKLGEIMGIPHDLVWRHPFPGPGIAIRVLGEVTPSQVEIARKADFIYIEEIKKAGIYEEISQAFACLLPVKSVGVMGDQRTYEQVIALRAIETVDFMTADWYIFDANFLKTVARRIVNEVPGVARVVYDITSKPPATVEWE</sequence>
<reference key="1">
    <citation type="journal article" date="2004" name="Nature">
        <title>Genome evolution in yeasts.</title>
        <authorList>
            <person name="Dujon B."/>
            <person name="Sherman D."/>
            <person name="Fischer G."/>
            <person name="Durrens P."/>
            <person name="Casaregola S."/>
            <person name="Lafontaine I."/>
            <person name="de Montigny J."/>
            <person name="Marck C."/>
            <person name="Neuveglise C."/>
            <person name="Talla E."/>
            <person name="Goffard N."/>
            <person name="Frangeul L."/>
            <person name="Aigle M."/>
            <person name="Anthouard V."/>
            <person name="Babour A."/>
            <person name="Barbe V."/>
            <person name="Barnay S."/>
            <person name="Blanchin S."/>
            <person name="Beckerich J.-M."/>
            <person name="Beyne E."/>
            <person name="Bleykasten C."/>
            <person name="Boisrame A."/>
            <person name="Boyer J."/>
            <person name="Cattolico L."/>
            <person name="Confanioleri F."/>
            <person name="de Daruvar A."/>
            <person name="Despons L."/>
            <person name="Fabre E."/>
            <person name="Fairhead C."/>
            <person name="Ferry-Dumazet H."/>
            <person name="Groppi A."/>
            <person name="Hantraye F."/>
            <person name="Hennequin C."/>
            <person name="Jauniaux N."/>
            <person name="Joyet P."/>
            <person name="Kachouri R."/>
            <person name="Kerrest A."/>
            <person name="Koszul R."/>
            <person name="Lemaire M."/>
            <person name="Lesur I."/>
            <person name="Ma L."/>
            <person name="Muller H."/>
            <person name="Nicaud J.-M."/>
            <person name="Nikolski M."/>
            <person name="Oztas S."/>
            <person name="Ozier-Kalogeropoulos O."/>
            <person name="Pellenz S."/>
            <person name="Potier S."/>
            <person name="Richard G.-F."/>
            <person name="Straub M.-L."/>
            <person name="Suleau A."/>
            <person name="Swennen D."/>
            <person name="Tekaia F."/>
            <person name="Wesolowski-Louvel M."/>
            <person name="Westhof E."/>
            <person name="Wirth B."/>
            <person name="Zeniou-Meyer M."/>
            <person name="Zivanovic Y."/>
            <person name="Bolotin-Fukuhara M."/>
            <person name="Thierry A."/>
            <person name="Bouchier C."/>
            <person name="Caudron B."/>
            <person name="Scarpelli C."/>
            <person name="Gaillardin C."/>
            <person name="Weissenbach J."/>
            <person name="Wincker P."/>
            <person name="Souciet J.-L."/>
        </authorList>
    </citation>
    <scope>NUCLEOTIDE SEQUENCE [LARGE SCALE GENOMIC DNA]</scope>
    <source>
        <strain>CLIB 122 / E 150</strain>
    </source>
</reference>
<keyword id="KW-0067">ATP-binding</keyword>
<keyword id="KW-0963">Cytoplasm</keyword>
<keyword id="KW-0315">Glutamine amidotransferase</keyword>
<keyword id="KW-0332">GMP biosynthesis</keyword>
<keyword id="KW-0436">Ligase</keyword>
<keyword id="KW-0460">Magnesium</keyword>
<keyword id="KW-0547">Nucleotide-binding</keyword>
<keyword id="KW-0658">Purine biosynthesis</keyword>
<keyword id="KW-1185">Reference proteome</keyword>
<evidence type="ECO:0000250" key="1">
    <source>
        <dbReference type="UniProtKB" id="P38625"/>
    </source>
</evidence>
<evidence type="ECO:0000250" key="2">
    <source>
        <dbReference type="UniProtKB" id="P49915"/>
    </source>
</evidence>
<evidence type="ECO:0000250" key="3">
    <source>
        <dbReference type="UniProtKB" id="Q4WFT3"/>
    </source>
</evidence>
<evidence type="ECO:0000250" key="4">
    <source>
        <dbReference type="UniProtKB" id="Q9P772"/>
    </source>
</evidence>
<evidence type="ECO:0000255" key="5">
    <source>
        <dbReference type="PROSITE-ProRule" id="PRU00605"/>
    </source>
</evidence>
<evidence type="ECO:0000255" key="6">
    <source>
        <dbReference type="PROSITE-ProRule" id="PRU00886"/>
    </source>
</evidence>
<protein>
    <recommendedName>
        <fullName>GMP synthase [glutamine-hydrolyzing]</fullName>
        <ecNumber evidence="1">6.3.5.2</ecNumber>
    </recommendedName>
    <alternativeName>
        <fullName>GMP synthetase</fullName>
    </alternativeName>
    <alternativeName>
        <fullName>Glutamine amidotransferase</fullName>
    </alternativeName>
</protein>
<accession>Q6CEF3</accession>
<proteinExistence type="inferred from homology"/>
<dbReference type="EC" id="6.3.5.2" evidence="1"/>
<dbReference type="EMBL" id="CR382128">
    <property type="protein sequence ID" value="CAG83212.1"/>
    <property type="molecule type" value="Genomic_DNA"/>
</dbReference>
<dbReference type="RefSeq" id="XP_500959.1">
    <property type="nucleotide sequence ID" value="XM_500959.1"/>
</dbReference>
<dbReference type="SMR" id="Q6CEF3"/>
<dbReference type="FunCoup" id="Q6CEF3">
    <property type="interactions" value="1124"/>
</dbReference>
<dbReference type="STRING" id="284591.Q6CEF3"/>
<dbReference type="EnsemblFungi" id="CAG83212">
    <property type="protein sequence ID" value="CAG83212"/>
    <property type="gene ID" value="YALI0_B16104g"/>
</dbReference>
<dbReference type="KEGG" id="yli:2906785"/>
<dbReference type="VEuPathDB" id="FungiDB:YALI0_B16104g"/>
<dbReference type="HOGENOM" id="CLU_014340_0_5_1"/>
<dbReference type="InParanoid" id="Q6CEF3"/>
<dbReference type="OMA" id="IWQSFAV"/>
<dbReference type="OrthoDB" id="103338at4891"/>
<dbReference type="UniPathway" id="UPA00189">
    <property type="reaction ID" value="UER00296"/>
</dbReference>
<dbReference type="Proteomes" id="UP000001300">
    <property type="component" value="Chromosome B"/>
</dbReference>
<dbReference type="GO" id="GO:0005829">
    <property type="term" value="C:cytosol"/>
    <property type="evidence" value="ECO:0000318"/>
    <property type="project" value="GO_Central"/>
</dbReference>
<dbReference type="GO" id="GO:0005524">
    <property type="term" value="F:ATP binding"/>
    <property type="evidence" value="ECO:0007669"/>
    <property type="project" value="UniProtKB-KW"/>
</dbReference>
<dbReference type="GO" id="GO:0003922">
    <property type="term" value="F:GMP synthase (glutamine-hydrolyzing) activity"/>
    <property type="evidence" value="ECO:0000250"/>
    <property type="project" value="UniProtKB"/>
</dbReference>
<dbReference type="GO" id="GO:0003921">
    <property type="term" value="F:GMP synthase activity"/>
    <property type="evidence" value="ECO:0000318"/>
    <property type="project" value="GO_Central"/>
</dbReference>
<dbReference type="GO" id="GO:0006177">
    <property type="term" value="P:GMP biosynthetic process"/>
    <property type="evidence" value="ECO:0000250"/>
    <property type="project" value="UniProtKB"/>
</dbReference>
<dbReference type="CDD" id="cd01742">
    <property type="entry name" value="GATase1_GMP_Synthase"/>
    <property type="match status" value="1"/>
</dbReference>
<dbReference type="CDD" id="cd01997">
    <property type="entry name" value="GMP_synthase_C"/>
    <property type="match status" value="1"/>
</dbReference>
<dbReference type="FunFam" id="3.30.300.10:FF:000002">
    <property type="entry name" value="GMP synthase [glutamine-hydrolyzing]"/>
    <property type="match status" value="1"/>
</dbReference>
<dbReference type="FunFam" id="3.40.50.620:FF:000001">
    <property type="entry name" value="GMP synthase [glutamine-hydrolyzing]"/>
    <property type="match status" value="1"/>
</dbReference>
<dbReference type="FunFam" id="3.40.50.880:FF:000001">
    <property type="entry name" value="GMP synthase [glutamine-hydrolyzing]"/>
    <property type="match status" value="1"/>
</dbReference>
<dbReference type="Gene3D" id="3.30.300.10">
    <property type="match status" value="1"/>
</dbReference>
<dbReference type="Gene3D" id="3.40.50.880">
    <property type="match status" value="1"/>
</dbReference>
<dbReference type="Gene3D" id="3.40.50.620">
    <property type="entry name" value="HUPs"/>
    <property type="match status" value="1"/>
</dbReference>
<dbReference type="HAMAP" id="MF_00344">
    <property type="entry name" value="GMP_synthase"/>
    <property type="match status" value="1"/>
</dbReference>
<dbReference type="InterPro" id="IPR029062">
    <property type="entry name" value="Class_I_gatase-like"/>
</dbReference>
<dbReference type="InterPro" id="IPR017926">
    <property type="entry name" value="GATASE"/>
</dbReference>
<dbReference type="InterPro" id="IPR001674">
    <property type="entry name" value="GMP_synth_C"/>
</dbReference>
<dbReference type="InterPro" id="IPR004739">
    <property type="entry name" value="GMP_synth_GATase"/>
</dbReference>
<dbReference type="InterPro" id="IPR022955">
    <property type="entry name" value="GMP_synthase"/>
</dbReference>
<dbReference type="InterPro" id="IPR025777">
    <property type="entry name" value="GMPS_ATP_PPase_dom"/>
</dbReference>
<dbReference type="InterPro" id="IPR022310">
    <property type="entry name" value="NAD/GMP_synthase"/>
</dbReference>
<dbReference type="InterPro" id="IPR014729">
    <property type="entry name" value="Rossmann-like_a/b/a_fold"/>
</dbReference>
<dbReference type="NCBIfam" id="TIGR00884">
    <property type="entry name" value="guaA_Cterm"/>
    <property type="match status" value="1"/>
</dbReference>
<dbReference type="NCBIfam" id="TIGR00888">
    <property type="entry name" value="guaA_Nterm"/>
    <property type="match status" value="1"/>
</dbReference>
<dbReference type="NCBIfam" id="NF000848">
    <property type="entry name" value="PRK00074.1"/>
    <property type="match status" value="1"/>
</dbReference>
<dbReference type="PANTHER" id="PTHR11922:SF2">
    <property type="entry name" value="GMP SYNTHASE [GLUTAMINE-HYDROLYZING]"/>
    <property type="match status" value="1"/>
</dbReference>
<dbReference type="PANTHER" id="PTHR11922">
    <property type="entry name" value="GMP SYNTHASE-RELATED"/>
    <property type="match status" value="1"/>
</dbReference>
<dbReference type="Pfam" id="PF00117">
    <property type="entry name" value="GATase"/>
    <property type="match status" value="1"/>
</dbReference>
<dbReference type="Pfam" id="PF00958">
    <property type="entry name" value="GMP_synt_C"/>
    <property type="match status" value="1"/>
</dbReference>
<dbReference type="Pfam" id="PF02540">
    <property type="entry name" value="NAD_synthase"/>
    <property type="match status" value="1"/>
</dbReference>
<dbReference type="PRINTS" id="PR00097">
    <property type="entry name" value="ANTSNTHASEII"/>
</dbReference>
<dbReference type="PRINTS" id="PR00096">
    <property type="entry name" value="GATASE"/>
</dbReference>
<dbReference type="SUPFAM" id="SSF52402">
    <property type="entry name" value="Adenine nucleotide alpha hydrolases-like"/>
    <property type="match status" value="1"/>
</dbReference>
<dbReference type="SUPFAM" id="SSF52317">
    <property type="entry name" value="Class I glutamine amidotransferase-like"/>
    <property type="match status" value="1"/>
</dbReference>
<dbReference type="SUPFAM" id="SSF54810">
    <property type="entry name" value="GMP synthetase C-terminal dimerisation domain"/>
    <property type="match status" value="1"/>
</dbReference>
<dbReference type="PROSITE" id="PS51273">
    <property type="entry name" value="GATASE_TYPE_1"/>
    <property type="match status" value="1"/>
</dbReference>
<dbReference type="PROSITE" id="PS51553">
    <property type="entry name" value="GMPS_ATP_PPASE"/>
    <property type="match status" value="1"/>
</dbReference>
<gene>
    <name type="primary">GUA1</name>
    <name type="ordered locus">YALI0B16104g</name>
</gene>